<name>ITM2C_RAT</name>
<keyword id="KW-1003">Cell membrane</keyword>
<keyword id="KW-0165">Cleavage on pair of basic residues</keyword>
<keyword id="KW-1015">Disulfide bond</keyword>
<keyword id="KW-0325">Glycoprotein</keyword>
<keyword id="KW-0458">Lysosome</keyword>
<keyword id="KW-0472">Membrane</keyword>
<keyword id="KW-0597">Phosphoprotein</keyword>
<keyword id="KW-1185">Reference proteome</keyword>
<keyword id="KW-0735">Signal-anchor</keyword>
<keyword id="KW-0812">Transmembrane</keyword>
<keyword id="KW-1133">Transmembrane helix</keyword>
<comment type="function">
    <text evidence="1">Negative regulator of amyloid-beta peptide production. May inhibit the processing of APP by blocking its access to alpha- and beta-secretase. Binding to the beta-secretase-cleaved APP C-terminal fragment is negligible, suggesting that ITM2C is a poor gamma-secretase cleavage inhibitor. May play a role in TNF-induced cell death and neuronal differentiation (By similarity).</text>
</comment>
<comment type="subunit">
    <text evidence="1">Interacts with BACE1. Interacts with APP. Interacts with STMN2 (By similarity).</text>
</comment>
<comment type="subcellular location">
    <subcellularLocation>
        <location evidence="1">Lysosome membrane</location>
        <topology evidence="1">Single-pass type II membrane protein</topology>
    </subcellularLocation>
    <subcellularLocation>
        <location evidence="1">Cell membrane</location>
        <topology evidence="1">Single-pass type II membrane protein</topology>
    </subcellularLocation>
</comment>
<comment type="PTM">
    <text evidence="1">Type I membrane-bound, as well as soluble, furin has a pre-eminent role in ITM2C proteolytic processing. PCSK7 and PCSK5 may also be involved although to a lesser extent. The soluble form of PCSK7 is incapable of processing ITM2C. Fails to undergo shedding by ADAM10 and intramembrane cleavage by SPPL2B (By similarity).</text>
</comment>
<comment type="similarity">
    <text evidence="4">Belongs to the ITM2 family.</text>
</comment>
<sequence length="269" mass="30480">MVKISFQPAVAGVKAEKADKAAASGPASASAPAAEILLTPAREERPPRHRSRKGGSVGGVCYLSMGMVVLLMGLVFASVYIYRYFFLAQLARDNFFHCGVLYEDSLSSQIRTRLELEEDVKIYLEENYERINVPVPQFGGGDPADIIHDFQRGLTAYHDISLDKCYVIELNTTIVLPPRNFWELLMNVKRGTYLPQTYIIQEEMVVTEHVRDKEALGSFIYHLCNGKDTYRLRRRATRRRINKRGAKNCNAIRHFENTFVVETLICGVV</sequence>
<evidence type="ECO:0000250" key="1"/>
<evidence type="ECO:0000255" key="2"/>
<evidence type="ECO:0000255" key="3">
    <source>
        <dbReference type="PROSITE-ProRule" id="PRU00255"/>
    </source>
</evidence>
<evidence type="ECO:0000305" key="4"/>
<evidence type="ECO:0007744" key="5">
    <source>
    </source>
</evidence>
<protein>
    <recommendedName>
        <fullName>Integral membrane protein 2C</fullName>
    </recommendedName>
    <component>
        <recommendedName>
            <fullName>CT-BRI3</fullName>
        </recommendedName>
    </component>
</protein>
<feature type="chain" id="PRO_0000154829" description="Integral membrane protein 2C">
    <location>
        <begin position="1"/>
        <end position="269"/>
    </location>
</feature>
<feature type="peptide" id="PRO_0000232648" description="CT-BRI3">
    <location>
        <begin position="244"/>
        <end position="269"/>
    </location>
</feature>
<feature type="transmembrane region" description="Helical; Signal-anchor for type II membrane protein" evidence="2">
    <location>
        <begin position="57"/>
        <end position="77"/>
    </location>
</feature>
<feature type="domain" description="BRICHOS" evidence="3">
    <location>
        <begin position="138"/>
        <end position="232"/>
    </location>
</feature>
<feature type="site" description="Cleavage; by furin" evidence="1">
    <location>
        <begin position="243"/>
        <end position="244"/>
    </location>
</feature>
<feature type="modified residue" description="Phosphothreonine" evidence="5">
    <location>
        <position position="39"/>
    </location>
</feature>
<feature type="glycosylation site" description="N-linked (GlcNAc...) asparagine" evidence="2">
    <location>
        <position position="171"/>
    </location>
</feature>
<feature type="disulfide bond" evidence="1">
    <location>
        <begin position="165"/>
        <end position="224"/>
    </location>
</feature>
<reference key="1">
    <citation type="journal article" date="2004" name="Genome Res.">
        <title>The status, quality, and expansion of the NIH full-length cDNA project: the Mammalian Gene Collection (MGC).</title>
        <authorList>
            <consortium name="The MGC Project Team"/>
        </authorList>
    </citation>
    <scope>NUCLEOTIDE SEQUENCE [LARGE SCALE MRNA]</scope>
    <source>
        <tissue>Testis</tissue>
    </source>
</reference>
<reference key="2">
    <citation type="journal article" date="2012" name="Nat. Commun.">
        <title>Quantitative maps of protein phosphorylation sites across 14 different rat organs and tissues.</title>
        <authorList>
            <person name="Lundby A."/>
            <person name="Secher A."/>
            <person name="Lage K."/>
            <person name="Nordsborg N.B."/>
            <person name="Dmytriyev A."/>
            <person name="Lundby C."/>
            <person name="Olsen J.V."/>
        </authorList>
    </citation>
    <scope>PHOSPHORYLATION [LARGE SCALE ANALYSIS] AT THR-39</scope>
    <scope>IDENTIFICATION BY MASS SPECTROMETRY [LARGE SCALE ANALYSIS]</scope>
</reference>
<gene>
    <name type="primary">Itm2c</name>
</gene>
<proteinExistence type="evidence at protein level"/>
<organism>
    <name type="scientific">Rattus norvegicus</name>
    <name type="common">Rat</name>
    <dbReference type="NCBI Taxonomy" id="10116"/>
    <lineage>
        <taxon>Eukaryota</taxon>
        <taxon>Metazoa</taxon>
        <taxon>Chordata</taxon>
        <taxon>Craniata</taxon>
        <taxon>Vertebrata</taxon>
        <taxon>Euteleostomi</taxon>
        <taxon>Mammalia</taxon>
        <taxon>Eutheria</taxon>
        <taxon>Euarchontoglires</taxon>
        <taxon>Glires</taxon>
        <taxon>Rodentia</taxon>
        <taxon>Myomorpha</taxon>
        <taxon>Muroidea</taxon>
        <taxon>Muridae</taxon>
        <taxon>Murinae</taxon>
        <taxon>Rattus</taxon>
    </lineage>
</organism>
<accession>Q5PQL7</accession>
<dbReference type="EMBL" id="BC087127">
    <property type="protein sequence ID" value="AAH87127.1"/>
    <property type="molecule type" value="mRNA"/>
</dbReference>
<dbReference type="RefSeq" id="NP_001009674.1">
    <property type="nucleotide sequence ID" value="NM_001009674.1"/>
</dbReference>
<dbReference type="SMR" id="Q5PQL7"/>
<dbReference type="BioGRID" id="257010">
    <property type="interactions" value="1"/>
</dbReference>
<dbReference type="FunCoup" id="Q5PQL7">
    <property type="interactions" value="1906"/>
</dbReference>
<dbReference type="STRING" id="10116.ENSRNOP00000023535"/>
<dbReference type="GlyCosmos" id="Q5PQL7">
    <property type="glycosylation" value="1 site, No reported glycans"/>
</dbReference>
<dbReference type="GlyGen" id="Q5PQL7">
    <property type="glycosylation" value="1 site"/>
</dbReference>
<dbReference type="iPTMnet" id="Q5PQL7"/>
<dbReference type="PhosphoSitePlus" id="Q5PQL7"/>
<dbReference type="SwissPalm" id="Q5PQL7"/>
<dbReference type="jPOST" id="Q5PQL7"/>
<dbReference type="PaxDb" id="10116-ENSRNOP00000023535"/>
<dbReference type="Ensembl" id="ENSRNOT00000023535.6">
    <property type="protein sequence ID" value="ENSRNOP00000023535.4"/>
    <property type="gene ID" value="ENSRNOG00000017359.6"/>
</dbReference>
<dbReference type="GeneID" id="301575"/>
<dbReference type="KEGG" id="rno:301575"/>
<dbReference type="UCSC" id="RGD:1309503">
    <property type="organism name" value="rat"/>
</dbReference>
<dbReference type="AGR" id="RGD:1309503"/>
<dbReference type="CTD" id="81618"/>
<dbReference type="RGD" id="1309503">
    <property type="gene designation" value="Itm2c"/>
</dbReference>
<dbReference type="eggNOG" id="KOG4681">
    <property type="taxonomic scope" value="Eukaryota"/>
</dbReference>
<dbReference type="GeneTree" id="ENSGT00950000183115"/>
<dbReference type="HOGENOM" id="CLU_074596_0_0_1"/>
<dbReference type="InParanoid" id="Q5PQL7"/>
<dbReference type="OMA" id="AGNCNHI"/>
<dbReference type="OrthoDB" id="9982095at2759"/>
<dbReference type="PhylomeDB" id="Q5PQL7"/>
<dbReference type="TreeFam" id="TF317770"/>
<dbReference type="PRO" id="PR:Q5PQL7"/>
<dbReference type="Proteomes" id="UP000002494">
    <property type="component" value="Chromosome 9"/>
</dbReference>
<dbReference type="Bgee" id="ENSRNOG00000017359">
    <property type="expression patterns" value="Expressed in frontal cortex and 20 other cell types or tissues"/>
</dbReference>
<dbReference type="GO" id="GO:0005794">
    <property type="term" value="C:Golgi apparatus"/>
    <property type="evidence" value="ECO:0000318"/>
    <property type="project" value="GO_Central"/>
</dbReference>
<dbReference type="GO" id="GO:0005765">
    <property type="term" value="C:lysosomal membrane"/>
    <property type="evidence" value="ECO:0007669"/>
    <property type="project" value="UniProtKB-SubCell"/>
</dbReference>
<dbReference type="GO" id="GO:0005764">
    <property type="term" value="C:lysosome"/>
    <property type="evidence" value="ECO:0000250"/>
    <property type="project" value="UniProtKB"/>
</dbReference>
<dbReference type="GO" id="GO:0048471">
    <property type="term" value="C:perinuclear region of cytoplasm"/>
    <property type="evidence" value="ECO:0000266"/>
    <property type="project" value="RGD"/>
</dbReference>
<dbReference type="GO" id="GO:0005886">
    <property type="term" value="C:plasma membrane"/>
    <property type="evidence" value="ECO:0000250"/>
    <property type="project" value="UniProtKB"/>
</dbReference>
<dbReference type="GO" id="GO:0001540">
    <property type="term" value="F:amyloid-beta binding"/>
    <property type="evidence" value="ECO:0000266"/>
    <property type="project" value="RGD"/>
</dbReference>
<dbReference type="GO" id="GO:0005524">
    <property type="term" value="F:ATP binding"/>
    <property type="evidence" value="ECO:0000266"/>
    <property type="project" value="RGD"/>
</dbReference>
<dbReference type="GO" id="GO:0042985">
    <property type="term" value="P:negative regulation of amyloid precursor protein biosynthetic process"/>
    <property type="evidence" value="ECO:0000318"/>
    <property type="project" value="GO_Central"/>
</dbReference>
<dbReference type="GO" id="GO:0010977">
    <property type="term" value="P:negative regulation of neuron projection development"/>
    <property type="evidence" value="ECO:0000266"/>
    <property type="project" value="RGD"/>
</dbReference>
<dbReference type="GO" id="GO:0030182">
    <property type="term" value="P:neuron differentiation"/>
    <property type="evidence" value="ECO:0000250"/>
    <property type="project" value="UniProtKB"/>
</dbReference>
<dbReference type="GO" id="GO:2001238">
    <property type="term" value="P:positive regulation of extrinsic apoptotic signaling pathway"/>
    <property type="evidence" value="ECO:0000266"/>
    <property type="project" value="RGD"/>
</dbReference>
<dbReference type="Gene3D" id="3.30.390.150">
    <property type="match status" value="1"/>
</dbReference>
<dbReference type="InterPro" id="IPR007084">
    <property type="entry name" value="BRICHOS_dom"/>
</dbReference>
<dbReference type="InterPro" id="IPR040145">
    <property type="entry name" value="ITM2"/>
</dbReference>
<dbReference type="PANTHER" id="PTHR10962:SF5">
    <property type="entry name" value="INTEGRAL MEMBRANE PROTEIN 2C"/>
    <property type="match status" value="1"/>
</dbReference>
<dbReference type="PANTHER" id="PTHR10962">
    <property type="entry name" value="INTEGRAL TRANSMEMBRANE PROTEIN 2"/>
    <property type="match status" value="1"/>
</dbReference>
<dbReference type="Pfam" id="PF04089">
    <property type="entry name" value="BRICHOS"/>
    <property type="match status" value="1"/>
</dbReference>
<dbReference type="SMART" id="SM01039">
    <property type="entry name" value="BRICHOS"/>
    <property type="match status" value="1"/>
</dbReference>
<dbReference type="PROSITE" id="PS50869">
    <property type="entry name" value="BRICHOS"/>
    <property type="match status" value="1"/>
</dbReference>